<name>CLL3_ARATH</name>
<dbReference type="EMBL" id="AC007258">
    <property type="protein sequence ID" value="AAD39323.1"/>
    <property type="status" value="ALT_SEQ"/>
    <property type="molecule type" value="Genomic_DNA"/>
</dbReference>
<dbReference type="EMBL" id="CP002684">
    <property type="protein sequence ID" value="AEE33619.1"/>
    <property type="molecule type" value="Genomic_DNA"/>
</dbReference>
<dbReference type="PIR" id="A96622">
    <property type="entry name" value="A96622"/>
</dbReference>
<dbReference type="RefSeq" id="NP_176189.1">
    <property type="nucleotide sequence ID" value="NM_104673.1"/>
</dbReference>
<dbReference type="SMR" id="Q9XIE8"/>
<dbReference type="FunCoup" id="Q9XIE8">
    <property type="interactions" value="102"/>
</dbReference>
<dbReference type="STRING" id="3702.Q9XIE8"/>
<dbReference type="PaxDb" id="3702-AT1G59800.1"/>
<dbReference type="EnsemblPlants" id="AT1G59800.1">
    <property type="protein sequence ID" value="AT1G59800.1"/>
    <property type="gene ID" value="AT1G59800"/>
</dbReference>
<dbReference type="GeneID" id="842273"/>
<dbReference type="Gramene" id="AT1G59800.1">
    <property type="protein sequence ID" value="AT1G59800.1"/>
    <property type="gene ID" value="AT1G59800"/>
</dbReference>
<dbReference type="KEGG" id="ath:AT1G59800"/>
<dbReference type="Araport" id="AT1G59800"/>
<dbReference type="TAIR" id="AT1G59800"/>
<dbReference type="eggNOG" id="KOG2166">
    <property type="taxonomic scope" value="Eukaryota"/>
</dbReference>
<dbReference type="HOGENOM" id="CLU_004747_2_0_1"/>
<dbReference type="InParanoid" id="Q9XIE8"/>
<dbReference type="OMA" id="HDECMLR"/>
<dbReference type="PhylomeDB" id="Q9XIE8"/>
<dbReference type="PRO" id="PR:Q9XIE8"/>
<dbReference type="Proteomes" id="UP000006548">
    <property type="component" value="Chromosome 1"/>
</dbReference>
<dbReference type="ExpressionAtlas" id="Q9XIE8">
    <property type="expression patterns" value="baseline and differential"/>
</dbReference>
<dbReference type="GO" id="GO:0031625">
    <property type="term" value="F:ubiquitin protein ligase binding"/>
    <property type="evidence" value="ECO:0007669"/>
    <property type="project" value="InterPro"/>
</dbReference>
<dbReference type="GO" id="GO:0006511">
    <property type="term" value="P:ubiquitin-dependent protein catabolic process"/>
    <property type="evidence" value="ECO:0007669"/>
    <property type="project" value="InterPro"/>
</dbReference>
<dbReference type="FunFam" id="1.20.1310.10:FF:000001">
    <property type="entry name" value="Cullin 3"/>
    <property type="match status" value="1"/>
</dbReference>
<dbReference type="Gene3D" id="1.20.1310.10">
    <property type="entry name" value="Cullin Repeats"/>
    <property type="match status" value="2"/>
</dbReference>
<dbReference type="InterPro" id="IPR045093">
    <property type="entry name" value="Cullin"/>
</dbReference>
<dbReference type="InterPro" id="IPR001373">
    <property type="entry name" value="Cullin_N"/>
</dbReference>
<dbReference type="InterPro" id="IPR016159">
    <property type="entry name" value="Cullin_repeat-like_dom_sf"/>
</dbReference>
<dbReference type="PANTHER" id="PTHR11932">
    <property type="entry name" value="CULLIN"/>
    <property type="match status" value="1"/>
</dbReference>
<dbReference type="Pfam" id="PF00888">
    <property type="entry name" value="Cullin"/>
    <property type="match status" value="1"/>
</dbReference>
<dbReference type="SUPFAM" id="SSF74788">
    <property type="entry name" value="Cullin repeat-like"/>
    <property type="match status" value="1"/>
</dbReference>
<proteinExistence type="inferred from homology"/>
<accession>Q9XIE8</accession>
<evidence type="ECO:0000305" key="1"/>
<comment type="similarity">
    <text evidence="1">Belongs to the cullin family.</text>
</comment>
<comment type="sequence caution" evidence="1">
    <conflict type="erroneous gene model prediction">
        <sequence resource="EMBL-CDS" id="AAD39323"/>
    </conflict>
</comment>
<keyword id="KW-1185">Reference proteome</keyword>
<reference key="1">
    <citation type="journal article" date="2000" name="Nature">
        <title>Sequence and analysis of chromosome 1 of the plant Arabidopsis thaliana.</title>
        <authorList>
            <person name="Theologis A."/>
            <person name="Ecker J.R."/>
            <person name="Palm C.J."/>
            <person name="Federspiel N.A."/>
            <person name="Kaul S."/>
            <person name="White O."/>
            <person name="Alonso J."/>
            <person name="Altafi H."/>
            <person name="Araujo R."/>
            <person name="Bowman C.L."/>
            <person name="Brooks S.Y."/>
            <person name="Buehler E."/>
            <person name="Chan A."/>
            <person name="Chao Q."/>
            <person name="Chen H."/>
            <person name="Cheuk R.F."/>
            <person name="Chin C.W."/>
            <person name="Chung M.K."/>
            <person name="Conn L."/>
            <person name="Conway A.B."/>
            <person name="Conway A.R."/>
            <person name="Creasy T.H."/>
            <person name="Dewar K."/>
            <person name="Dunn P."/>
            <person name="Etgu P."/>
            <person name="Feldblyum T.V."/>
            <person name="Feng J.-D."/>
            <person name="Fong B."/>
            <person name="Fujii C.Y."/>
            <person name="Gill J.E."/>
            <person name="Goldsmith A.D."/>
            <person name="Haas B."/>
            <person name="Hansen N.F."/>
            <person name="Hughes B."/>
            <person name="Huizar L."/>
            <person name="Hunter J.L."/>
            <person name="Jenkins J."/>
            <person name="Johnson-Hopson C."/>
            <person name="Khan S."/>
            <person name="Khaykin E."/>
            <person name="Kim C.J."/>
            <person name="Koo H.L."/>
            <person name="Kremenetskaia I."/>
            <person name="Kurtz D.B."/>
            <person name="Kwan A."/>
            <person name="Lam B."/>
            <person name="Langin-Hooper S."/>
            <person name="Lee A."/>
            <person name="Lee J.M."/>
            <person name="Lenz C.A."/>
            <person name="Li J.H."/>
            <person name="Li Y.-P."/>
            <person name="Lin X."/>
            <person name="Liu S.X."/>
            <person name="Liu Z.A."/>
            <person name="Luros J.S."/>
            <person name="Maiti R."/>
            <person name="Marziali A."/>
            <person name="Militscher J."/>
            <person name="Miranda M."/>
            <person name="Nguyen M."/>
            <person name="Nierman W.C."/>
            <person name="Osborne B.I."/>
            <person name="Pai G."/>
            <person name="Peterson J."/>
            <person name="Pham P.K."/>
            <person name="Rizzo M."/>
            <person name="Rooney T."/>
            <person name="Rowley D."/>
            <person name="Sakano H."/>
            <person name="Salzberg S.L."/>
            <person name="Schwartz J.R."/>
            <person name="Shinn P."/>
            <person name="Southwick A.M."/>
            <person name="Sun H."/>
            <person name="Tallon L.J."/>
            <person name="Tambunga G."/>
            <person name="Toriumi M.J."/>
            <person name="Town C.D."/>
            <person name="Utterback T."/>
            <person name="Van Aken S."/>
            <person name="Vaysberg M."/>
            <person name="Vysotskaia V.S."/>
            <person name="Walker M."/>
            <person name="Wu D."/>
            <person name="Yu G."/>
            <person name="Fraser C.M."/>
            <person name="Venter J.C."/>
            <person name="Davis R.W."/>
        </authorList>
    </citation>
    <scope>NUCLEOTIDE SEQUENCE [LARGE SCALE GENOMIC DNA]</scope>
    <source>
        <strain>cv. Columbia</strain>
    </source>
</reference>
<reference key="2">
    <citation type="journal article" date="2017" name="Plant J.">
        <title>Araport11: a complete reannotation of the Arabidopsis thaliana reference genome.</title>
        <authorList>
            <person name="Cheng C.Y."/>
            <person name="Krishnakumar V."/>
            <person name="Chan A.P."/>
            <person name="Thibaud-Nissen F."/>
            <person name="Schobel S."/>
            <person name="Town C.D."/>
        </authorList>
    </citation>
    <scope>GENOME REANNOTATION</scope>
    <source>
        <strain>cv. Columbia</strain>
    </source>
</reference>
<protein>
    <recommendedName>
        <fullName>Cullin-like protein 3</fullName>
    </recommendedName>
    <alternativeName>
        <fullName>Cullin-5</fullName>
        <shortName>AtCUL5</shortName>
    </alternativeName>
</protein>
<sequence length="255" mass="30465">MVAPTEIKFEVEWSNIQQGFTKLIRMIEGESEPAFNQEIMMMMHTATYRICAYKNPQQLYDKYRELIENYAIQTVLPSLREKHDECMLRELAKRWNAHKLLVRLFSRRLVYLDDSFLSKKGLPSLREVGLNCFRDQVYREMQSMAAEAILALIHKEREGEQIDRELVRNVIDVFVENGMGTLKKYEEDFERLMLQDTASYYSSKASRWIQEESCLDYTLKPQQCLQRERERVTHYLHPTTEPKLFEVRYGIIIWN</sequence>
<gene>
    <name type="ordered locus">At1g59800</name>
    <name type="ORF">F23H11.12</name>
</gene>
<organism>
    <name type="scientific">Arabidopsis thaliana</name>
    <name type="common">Mouse-ear cress</name>
    <dbReference type="NCBI Taxonomy" id="3702"/>
    <lineage>
        <taxon>Eukaryota</taxon>
        <taxon>Viridiplantae</taxon>
        <taxon>Streptophyta</taxon>
        <taxon>Embryophyta</taxon>
        <taxon>Tracheophyta</taxon>
        <taxon>Spermatophyta</taxon>
        <taxon>Magnoliopsida</taxon>
        <taxon>eudicotyledons</taxon>
        <taxon>Gunneridae</taxon>
        <taxon>Pentapetalae</taxon>
        <taxon>rosids</taxon>
        <taxon>malvids</taxon>
        <taxon>Brassicales</taxon>
        <taxon>Brassicaceae</taxon>
        <taxon>Camelineae</taxon>
        <taxon>Arabidopsis</taxon>
    </lineage>
</organism>
<feature type="chain" id="PRO_0000396854" description="Cullin-like protein 3">
    <location>
        <begin position="1"/>
        <end position="255"/>
    </location>
</feature>